<dbReference type="EC" id="2.7.1.148"/>
<dbReference type="EMBL" id="AP008226">
    <property type="protein sequence ID" value="BAD69993.1"/>
    <property type="molecule type" value="Genomic_DNA"/>
</dbReference>
<dbReference type="RefSeq" id="WP_011174171.1">
    <property type="nucleotide sequence ID" value="NC_006461.1"/>
</dbReference>
<dbReference type="RefSeq" id="YP_143436.1">
    <property type="nucleotide sequence ID" value="NC_006461.1"/>
</dbReference>
<dbReference type="PDB" id="1UEK">
    <property type="method" value="X-ray"/>
    <property type="resolution" value="1.70 A"/>
    <property type="chains" value="A=1-275"/>
</dbReference>
<dbReference type="PDBsum" id="1UEK"/>
<dbReference type="SMR" id="P83700"/>
<dbReference type="EnsemblBacteria" id="BAD69993">
    <property type="protein sequence ID" value="BAD69993"/>
    <property type="gene ID" value="BAD69993"/>
</dbReference>
<dbReference type="GeneID" id="3169608"/>
<dbReference type="KEGG" id="ttj:TTHA0170"/>
<dbReference type="PATRIC" id="fig|300852.9.peg.168"/>
<dbReference type="eggNOG" id="COG1947">
    <property type="taxonomic scope" value="Bacteria"/>
</dbReference>
<dbReference type="HOGENOM" id="CLU_053057_1_1_0"/>
<dbReference type="PhylomeDB" id="P83700"/>
<dbReference type="UniPathway" id="UPA00056">
    <property type="reaction ID" value="UER00094"/>
</dbReference>
<dbReference type="EvolutionaryTrace" id="P83700"/>
<dbReference type="Proteomes" id="UP000000532">
    <property type="component" value="Chromosome"/>
</dbReference>
<dbReference type="GO" id="GO:0050515">
    <property type="term" value="F:4-(cytidine 5'-diphospho)-2-C-methyl-D-erythritol kinase activity"/>
    <property type="evidence" value="ECO:0007669"/>
    <property type="project" value="UniProtKB-UniRule"/>
</dbReference>
<dbReference type="GO" id="GO:0005524">
    <property type="term" value="F:ATP binding"/>
    <property type="evidence" value="ECO:0007669"/>
    <property type="project" value="UniProtKB-UniRule"/>
</dbReference>
<dbReference type="GO" id="GO:0019288">
    <property type="term" value="P:isopentenyl diphosphate biosynthetic process, methylerythritol 4-phosphate pathway"/>
    <property type="evidence" value="ECO:0007669"/>
    <property type="project" value="UniProtKB-UniRule"/>
</dbReference>
<dbReference type="GO" id="GO:0016114">
    <property type="term" value="P:terpenoid biosynthetic process"/>
    <property type="evidence" value="ECO:0007669"/>
    <property type="project" value="InterPro"/>
</dbReference>
<dbReference type="Gene3D" id="3.30.230.10">
    <property type="match status" value="1"/>
</dbReference>
<dbReference type="Gene3D" id="3.30.70.890">
    <property type="entry name" value="GHMP kinase, C-terminal domain"/>
    <property type="match status" value="1"/>
</dbReference>
<dbReference type="HAMAP" id="MF_00061">
    <property type="entry name" value="IspE"/>
    <property type="match status" value="1"/>
</dbReference>
<dbReference type="InterPro" id="IPR013750">
    <property type="entry name" value="GHMP_kinase_C_dom"/>
</dbReference>
<dbReference type="InterPro" id="IPR036554">
    <property type="entry name" value="GHMP_kinase_C_sf"/>
</dbReference>
<dbReference type="InterPro" id="IPR006204">
    <property type="entry name" value="GHMP_kinase_N_dom"/>
</dbReference>
<dbReference type="InterPro" id="IPR004424">
    <property type="entry name" value="IspE"/>
</dbReference>
<dbReference type="InterPro" id="IPR020568">
    <property type="entry name" value="Ribosomal_Su5_D2-typ_SF"/>
</dbReference>
<dbReference type="InterPro" id="IPR014721">
    <property type="entry name" value="Ribsml_uS5_D2-typ_fold_subgr"/>
</dbReference>
<dbReference type="NCBIfam" id="TIGR00154">
    <property type="entry name" value="ispE"/>
    <property type="match status" value="1"/>
</dbReference>
<dbReference type="PANTHER" id="PTHR43527">
    <property type="entry name" value="4-DIPHOSPHOCYTIDYL-2-C-METHYL-D-ERYTHRITOL KINASE, CHLOROPLASTIC"/>
    <property type="match status" value="1"/>
</dbReference>
<dbReference type="PANTHER" id="PTHR43527:SF2">
    <property type="entry name" value="4-DIPHOSPHOCYTIDYL-2-C-METHYL-D-ERYTHRITOL KINASE, CHLOROPLASTIC"/>
    <property type="match status" value="1"/>
</dbReference>
<dbReference type="Pfam" id="PF08544">
    <property type="entry name" value="GHMP_kinases_C"/>
    <property type="match status" value="1"/>
</dbReference>
<dbReference type="Pfam" id="PF00288">
    <property type="entry name" value="GHMP_kinases_N"/>
    <property type="match status" value="1"/>
</dbReference>
<dbReference type="PIRSF" id="PIRSF010376">
    <property type="entry name" value="IspE"/>
    <property type="match status" value="1"/>
</dbReference>
<dbReference type="SUPFAM" id="SSF55060">
    <property type="entry name" value="GHMP Kinase, C-terminal domain"/>
    <property type="match status" value="1"/>
</dbReference>
<dbReference type="SUPFAM" id="SSF54211">
    <property type="entry name" value="Ribosomal protein S5 domain 2-like"/>
    <property type="match status" value="1"/>
</dbReference>
<feature type="chain" id="PRO_0000189279" description="4-diphosphocytidyl-2-C-methyl-D-erythritol kinase">
    <location>
        <begin position="1"/>
        <end position="275"/>
    </location>
</feature>
<feature type="active site" evidence="3">
    <location>
        <position position="8"/>
    </location>
</feature>
<feature type="active site" evidence="3">
    <location>
        <position position="125"/>
    </location>
</feature>
<feature type="binding site" evidence="1">
    <location>
        <begin position="86"/>
        <end position="96"/>
    </location>
    <ligand>
        <name>ATP</name>
        <dbReference type="ChEBI" id="CHEBI:30616"/>
    </ligand>
</feature>
<feature type="strand" evidence="4">
    <location>
        <begin position="2"/>
        <end position="18"/>
    </location>
</feature>
<feature type="strand" evidence="4">
    <location>
        <begin position="22"/>
        <end position="46"/>
    </location>
</feature>
<feature type="strand" evidence="4">
    <location>
        <begin position="48"/>
        <end position="52"/>
    </location>
</feature>
<feature type="helix" evidence="4">
    <location>
        <begin position="55"/>
        <end position="57"/>
    </location>
</feature>
<feature type="helix" evidence="4">
    <location>
        <begin position="59"/>
        <end position="70"/>
    </location>
</feature>
<feature type="strand" evidence="4">
    <location>
        <begin position="76"/>
        <end position="82"/>
    </location>
</feature>
<feature type="strand" evidence="4">
    <location>
        <begin position="87"/>
        <end position="91"/>
    </location>
</feature>
<feature type="helix" evidence="4">
    <location>
        <begin position="93"/>
        <end position="108"/>
    </location>
</feature>
<feature type="helix" evidence="4">
    <location>
        <begin position="115"/>
        <end position="122"/>
    </location>
</feature>
<feature type="helix" evidence="4">
    <location>
        <begin position="126"/>
        <end position="131"/>
    </location>
</feature>
<feature type="strand" evidence="4">
    <location>
        <begin position="133"/>
        <end position="138"/>
    </location>
</feature>
<feature type="turn" evidence="4">
    <location>
        <begin position="139"/>
        <end position="142"/>
    </location>
</feature>
<feature type="strand" evidence="4">
    <location>
        <begin position="143"/>
        <end position="147"/>
    </location>
</feature>
<feature type="strand" evidence="4">
    <location>
        <begin position="152"/>
        <end position="158"/>
    </location>
</feature>
<feature type="helix" evidence="4">
    <location>
        <begin position="165"/>
        <end position="170"/>
    </location>
</feature>
<feature type="helix" evidence="4">
    <location>
        <begin position="174"/>
        <end position="176"/>
    </location>
</feature>
<feature type="helix" evidence="4">
    <location>
        <begin position="183"/>
        <end position="192"/>
    </location>
</feature>
<feature type="helix" evidence="4">
    <location>
        <begin position="203"/>
        <end position="209"/>
    </location>
</feature>
<feature type="helix" evidence="4">
    <location>
        <begin position="212"/>
        <end position="222"/>
    </location>
</feature>
<feature type="strand" evidence="4">
    <location>
        <begin position="226"/>
        <end position="230"/>
    </location>
</feature>
<feature type="strand" evidence="4">
    <location>
        <begin position="237"/>
        <end position="240"/>
    </location>
</feature>
<feature type="helix" evidence="4">
    <location>
        <begin position="244"/>
        <end position="254"/>
    </location>
</feature>
<feature type="turn" evidence="4">
    <location>
        <begin position="255"/>
        <end position="257"/>
    </location>
</feature>
<feature type="strand" evidence="4">
    <location>
        <begin position="258"/>
        <end position="265"/>
    </location>
</feature>
<evidence type="ECO:0000255" key="1"/>
<evidence type="ECO:0000269" key="2">
    <source>
    </source>
</evidence>
<evidence type="ECO:0000305" key="3"/>
<evidence type="ECO:0007829" key="4">
    <source>
        <dbReference type="PDB" id="1UEK"/>
    </source>
</evidence>
<name>ISPE_THET8</name>
<comment type="function">
    <text evidence="2">Catalyzes the phosphorylation of the position 2 hydroxy group of 4-diphosphocytidyl-2C-methyl-D-erythritol.</text>
</comment>
<comment type="catalytic activity">
    <reaction evidence="2">
        <text>4-CDP-2-C-methyl-D-erythritol + ATP = 4-CDP-2-C-methyl-D-erythritol 2-phosphate + ADP + H(+)</text>
        <dbReference type="Rhea" id="RHEA:18437"/>
        <dbReference type="ChEBI" id="CHEBI:15378"/>
        <dbReference type="ChEBI" id="CHEBI:30616"/>
        <dbReference type="ChEBI" id="CHEBI:57823"/>
        <dbReference type="ChEBI" id="CHEBI:57919"/>
        <dbReference type="ChEBI" id="CHEBI:456216"/>
        <dbReference type="EC" id="2.7.1.148"/>
    </reaction>
</comment>
<comment type="pathway">
    <text evidence="2">Isoprenoid biosynthesis; isopentenyl diphosphate biosynthesis via DXP pathway; isopentenyl diphosphate from 1-deoxy-D-xylulose 5-phosphate: step 3/6.</text>
</comment>
<comment type="similarity">
    <text evidence="3">Belongs to the GHMP kinase family. IspE subfamily.</text>
</comment>
<protein>
    <recommendedName>
        <fullName>4-diphosphocytidyl-2-C-methyl-D-erythritol kinase</fullName>
        <shortName>CMK</shortName>
        <ecNumber>2.7.1.148</ecNumber>
    </recommendedName>
    <alternativeName>
        <fullName>4-(cytidine-5'-diphospho)-2-C-methyl-D-erythritol kinase</fullName>
    </alternativeName>
</protein>
<sequence length="275" mass="29253">MERLAPAKVNLGLSVRFRREDGYHELHTLFAPFSLADRLVVEPVSSGLHFQGPYGRENLAYRAASLYLEAAGQPGGVRILLEKRIPEGAGLGGGSSDAAQVLLALQALYPAEVDLFALARTLGADVPFFLLGRGAEARGVGERLKPLALPPVPAVVFFPGLRVPTPLVYRAVRPEDFGPDLPVEAILEALARGEEPPYWNSLEGPAFRLFPELKEVRGRMRALGLRGVLMSGSGSAFFGLAEGPDHARRAAEALRAWGRAWAGTLGGGDAGSGPA</sequence>
<keyword id="KW-0002">3D-structure</keyword>
<keyword id="KW-0067">ATP-binding</keyword>
<keyword id="KW-0414">Isoprene biosynthesis</keyword>
<keyword id="KW-0418">Kinase</keyword>
<keyword id="KW-0547">Nucleotide-binding</keyword>
<keyword id="KW-1185">Reference proteome</keyword>
<keyword id="KW-0808">Transferase</keyword>
<reference key="1">
    <citation type="submission" date="2004-11" db="EMBL/GenBank/DDBJ databases">
        <title>Complete genome sequence of Thermus thermophilus HB8.</title>
        <authorList>
            <person name="Masui R."/>
            <person name="Kurokawa K."/>
            <person name="Nakagawa N."/>
            <person name="Tokunaga F."/>
            <person name="Koyama Y."/>
            <person name="Shibata T."/>
            <person name="Oshima T."/>
            <person name="Yokoyama S."/>
            <person name="Yasunaga T."/>
            <person name="Kuramitsu S."/>
        </authorList>
    </citation>
    <scope>NUCLEOTIDE SEQUENCE [LARGE SCALE GENOMIC DNA]</scope>
    <source>
        <strain>ATCC 27634 / DSM 579 / HB8</strain>
    </source>
</reference>
<reference key="2">
    <citation type="journal article" date="2003" name="J. Biol. Chem.">
        <title>Crystal structure of 4-(cytidine 5'-diphospho)-2-C-methyl-D-erythritol kinase, an enzyme in the non-mevalonate pathway of isoprenoid synthesis.</title>
        <authorList>
            <person name="Wada T."/>
            <person name="Kuzuyama T."/>
            <person name="Satoh S."/>
            <person name="Kuramitsu S."/>
            <person name="Yokoyama S."/>
            <person name="Unzai S."/>
            <person name="Tame J.R.H."/>
            <person name="Park S.-Y."/>
        </authorList>
    </citation>
    <scope>X-RAY CRYSTALLOGRAPHY (1.7 ANGSTROMS)</scope>
    <scope>FUNCTION</scope>
    <scope>CATALYTIC ACTIVITY</scope>
    <scope>PATHWAY</scope>
    <source>
        <strain>ATCC 27634 / DSM 579 / HB8</strain>
    </source>
</reference>
<organism>
    <name type="scientific">Thermus thermophilus (strain ATCC 27634 / DSM 579 / HB8)</name>
    <dbReference type="NCBI Taxonomy" id="300852"/>
    <lineage>
        <taxon>Bacteria</taxon>
        <taxon>Thermotogati</taxon>
        <taxon>Deinococcota</taxon>
        <taxon>Deinococci</taxon>
        <taxon>Thermales</taxon>
        <taxon>Thermaceae</taxon>
        <taxon>Thermus</taxon>
    </lineage>
</organism>
<gene>
    <name type="primary">ispE</name>
    <name type="ordered locus">TTHA0170</name>
</gene>
<proteinExistence type="evidence at protein level"/>
<accession>P83700</accession>
<accession>Q5SLX3</accession>